<protein>
    <recommendedName>
        <fullName evidence="1">Homoserine O-acetyltransferase</fullName>
        <shortName evidence="1">HAT</shortName>
        <ecNumber evidence="1">2.3.1.31</ecNumber>
    </recommendedName>
    <alternativeName>
        <fullName evidence="1">Homoserine transacetylase</fullName>
        <shortName evidence="1">HTA</shortName>
    </alternativeName>
</protein>
<name>METXA_MYCLE</name>
<sequence length="382" mass="40298">MTISKVPTQKLPAEGEVGLVDIGSLTTESGAVIDDVCIAVQRWGELSPTRDNVVMVLHALTGDSHITGPAGPGHPTPGWWDWIAGPGAPIDTNRWCAIATNVLGGCRGSTGPSSLARDGKPWGSRFPLISIRDQVEADIAALAAMGITKVAAVVGGSMGGARALEWIIGHPDQVRAGLLLAVGVRATADQIGTQTTQIAAIKTDPNWQGGDYYETGRAPENGLTIARRFAHLTYRSEVELDTRFANNNQGNEDPATGGRYAVQSYLEHQGDKLLARFDAGSYVVLTETLNSHDVGRGRGGIGTALRGCPVPVVVGGITSDRLYPLRLQQELAEMLPGCTGLQVVDSTYGHDGFLVESEAVGKLIRQTLELADVGSKEDACSQ</sequence>
<gene>
    <name evidence="1" type="primary">metXA</name>
    <name type="synonym">metA</name>
    <name type="ordered locus">ML0682</name>
    <name type="ORF">MLCB1779.11</name>
</gene>
<evidence type="ECO:0000255" key="1">
    <source>
        <dbReference type="HAMAP-Rule" id="MF_00296"/>
    </source>
</evidence>
<proteinExistence type="inferred from homology"/>
<organism>
    <name type="scientific">Mycobacterium leprae (strain TN)</name>
    <dbReference type="NCBI Taxonomy" id="272631"/>
    <lineage>
        <taxon>Bacteria</taxon>
        <taxon>Bacillati</taxon>
        <taxon>Actinomycetota</taxon>
        <taxon>Actinomycetes</taxon>
        <taxon>Mycobacteriales</taxon>
        <taxon>Mycobacteriaceae</taxon>
        <taxon>Mycobacterium</taxon>
    </lineage>
</organism>
<feature type="chain" id="PRO_0000155729" description="Homoserine O-acetyltransferase">
    <location>
        <begin position="1"/>
        <end position="382"/>
    </location>
</feature>
<feature type="domain" description="AB hydrolase-1" evidence="1">
    <location>
        <begin position="52"/>
        <end position="356"/>
    </location>
</feature>
<feature type="active site" description="Nucleophile" evidence="1">
    <location>
        <position position="157"/>
    </location>
</feature>
<feature type="active site" evidence="1">
    <location>
        <position position="320"/>
    </location>
</feature>
<feature type="active site" evidence="1">
    <location>
        <position position="350"/>
    </location>
</feature>
<feature type="binding site" evidence="1">
    <location>
        <position position="227"/>
    </location>
    <ligand>
        <name>substrate</name>
    </ligand>
</feature>
<feature type="binding site" evidence="1">
    <location>
        <position position="351"/>
    </location>
    <ligand>
        <name>substrate</name>
    </ligand>
</feature>
<dbReference type="EC" id="2.3.1.31" evidence="1"/>
<dbReference type="EMBL" id="Z98271">
    <property type="protein sequence ID" value="CAB10992.1"/>
    <property type="molecule type" value="Genomic_DNA"/>
</dbReference>
<dbReference type="EMBL" id="AL583919">
    <property type="protein sequence ID" value="CAC30191.1"/>
    <property type="molecule type" value="Genomic_DNA"/>
</dbReference>
<dbReference type="PIR" id="T45301">
    <property type="entry name" value="T45301"/>
</dbReference>
<dbReference type="RefSeq" id="NP_301550.1">
    <property type="nucleotide sequence ID" value="NC_002677.1"/>
</dbReference>
<dbReference type="SMR" id="O32874"/>
<dbReference type="STRING" id="272631.gene:17574506"/>
<dbReference type="ESTHER" id="mycle-metx">
    <property type="family name" value="Homoserine_transacetylase"/>
</dbReference>
<dbReference type="KEGG" id="mle:ML0682"/>
<dbReference type="PATRIC" id="fig|272631.5.peg.1213"/>
<dbReference type="Leproma" id="ML0682"/>
<dbReference type="eggNOG" id="COG2021">
    <property type="taxonomic scope" value="Bacteria"/>
</dbReference>
<dbReference type="HOGENOM" id="CLU_028760_1_0_11"/>
<dbReference type="OrthoDB" id="9800754at2"/>
<dbReference type="UniPathway" id="UPA00051">
    <property type="reaction ID" value="UER00074"/>
</dbReference>
<dbReference type="Proteomes" id="UP000000806">
    <property type="component" value="Chromosome"/>
</dbReference>
<dbReference type="GO" id="GO:0005737">
    <property type="term" value="C:cytoplasm"/>
    <property type="evidence" value="ECO:0007669"/>
    <property type="project" value="UniProtKB-SubCell"/>
</dbReference>
<dbReference type="GO" id="GO:0004414">
    <property type="term" value="F:homoserine O-acetyltransferase activity"/>
    <property type="evidence" value="ECO:0007669"/>
    <property type="project" value="UniProtKB-UniRule"/>
</dbReference>
<dbReference type="GO" id="GO:0009092">
    <property type="term" value="P:homoserine metabolic process"/>
    <property type="evidence" value="ECO:0007669"/>
    <property type="project" value="TreeGrafter"/>
</dbReference>
<dbReference type="GO" id="GO:0009086">
    <property type="term" value="P:methionine biosynthetic process"/>
    <property type="evidence" value="ECO:0007669"/>
    <property type="project" value="UniProtKB-UniRule"/>
</dbReference>
<dbReference type="Gene3D" id="3.40.50.1820">
    <property type="entry name" value="alpha/beta hydrolase"/>
    <property type="match status" value="1"/>
</dbReference>
<dbReference type="HAMAP" id="MF_00296">
    <property type="entry name" value="MetX_acyltransf"/>
    <property type="match status" value="1"/>
</dbReference>
<dbReference type="InterPro" id="IPR000073">
    <property type="entry name" value="AB_hydrolase_1"/>
</dbReference>
<dbReference type="InterPro" id="IPR029058">
    <property type="entry name" value="AB_hydrolase_fold"/>
</dbReference>
<dbReference type="InterPro" id="IPR008220">
    <property type="entry name" value="HAT_MetX-like"/>
</dbReference>
<dbReference type="NCBIfam" id="TIGR01392">
    <property type="entry name" value="homoserO_Ac_trn"/>
    <property type="match status" value="1"/>
</dbReference>
<dbReference type="NCBIfam" id="NF001209">
    <property type="entry name" value="PRK00175.1"/>
    <property type="match status" value="1"/>
</dbReference>
<dbReference type="PANTHER" id="PTHR32268">
    <property type="entry name" value="HOMOSERINE O-ACETYLTRANSFERASE"/>
    <property type="match status" value="1"/>
</dbReference>
<dbReference type="PANTHER" id="PTHR32268:SF11">
    <property type="entry name" value="HOMOSERINE O-ACETYLTRANSFERASE"/>
    <property type="match status" value="1"/>
</dbReference>
<dbReference type="Pfam" id="PF00561">
    <property type="entry name" value="Abhydrolase_1"/>
    <property type="match status" value="1"/>
</dbReference>
<dbReference type="PIRSF" id="PIRSF000443">
    <property type="entry name" value="Homoser_Ac_trans"/>
    <property type="match status" value="1"/>
</dbReference>
<dbReference type="SUPFAM" id="SSF53474">
    <property type="entry name" value="alpha/beta-Hydrolases"/>
    <property type="match status" value="1"/>
</dbReference>
<comment type="function">
    <text evidence="1">Transfers an acetyl group from acetyl-CoA to L-homoserine, forming acetyl-L-homoserine.</text>
</comment>
<comment type="catalytic activity">
    <reaction evidence="1">
        <text>L-homoserine + acetyl-CoA = O-acetyl-L-homoserine + CoA</text>
        <dbReference type="Rhea" id="RHEA:13701"/>
        <dbReference type="ChEBI" id="CHEBI:57287"/>
        <dbReference type="ChEBI" id="CHEBI:57288"/>
        <dbReference type="ChEBI" id="CHEBI:57476"/>
        <dbReference type="ChEBI" id="CHEBI:57716"/>
        <dbReference type="EC" id="2.3.1.31"/>
    </reaction>
</comment>
<comment type="pathway">
    <text evidence="1">Amino-acid biosynthesis; L-methionine biosynthesis via de novo pathway; O-acetyl-L-homoserine from L-homoserine: step 1/1.</text>
</comment>
<comment type="subunit">
    <text evidence="1">Homodimer.</text>
</comment>
<comment type="subcellular location">
    <subcellularLocation>
        <location evidence="1">Cytoplasm</location>
    </subcellularLocation>
</comment>
<comment type="similarity">
    <text evidence="1">Belongs to the AB hydrolase superfamily. MetX family.</text>
</comment>
<keyword id="KW-0012">Acyltransferase</keyword>
<keyword id="KW-0028">Amino-acid biosynthesis</keyword>
<keyword id="KW-0963">Cytoplasm</keyword>
<keyword id="KW-0486">Methionine biosynthesis</keyword>
<keyword id="KW-1185">Reference proteome</keyword>
<keyword id="KW-0808">Transferase</keyword>
<reference key="1">
    <citation type="journal article" date="2001" name="Nature">
        <title>Massive gene decay in the leprosy bacillus.</title>
        <authorList>
            <person name="Cole S.T."/>
            <person name="Eiglmeier K."/>
            <person name="Parkhill J."/>
            <person name="James K.D."/>
            <person name="Thomson N.R."/>
            <person name="Wheeler P.R."/>
            <person name="Honore N."/>
            <person name="Garnier T."/>
            <person name="Churcher C.M."/>
            <person name="Harris D.E."/>
            <person name="Mungall K.L."/>
            <person name="Basham D."/>
            <person name="Brown D."/>
            <person name="Chillingworth T."/>
            <person name="Connor R."/>
            <person name="Davies R.M."/>
            <person name="Devlin K."/>
            <person name="Duthoy S."/>
            <person name="Feltwell T."/>
            <person name="Fraser A."/>
            <person name="Hamlin N."/>
            <person name="Holroyd S."/>
            <person name="Hornsby T."/>
            <person name="Jagels K."/>
            <person name="Lacroix C."/>
            <person name="Maclean J."/>
            <person name="Moule S."/>
            <person name="Murphy L.D."/>
            <person name="Oliver K."/>
            <person name="Quail M.A."/>
            <person name="Rajandream M.A."/>
            <person name="Rutherford K.M."/>
            <person name="Rutter S."/>
            <person name="Seeger K."/>
            <person name="Simon S."/>
            <person name="Simmonds M."/>
            <person name="Skelton J."/>
            <person name="Squares R."/>
            <person name="Squares S."/>
            <person name="Stevens K."/>
            <person name="Taylor K."/>
            <person name="Whitehead S."/>
            <person name="Woodward J.R."/>
            <person name="Barrell B.G."/>
        </authorList>
    </citation>
    <scope>NUCLEOTIDE SEQUENCE [LARGE SCALE GENOMIC DNA]</scope>
    <source>
        <strain>TN</strain>
    </source>
</reference>
<accession>O32874</accession>